<dbReference type="EMBL" id="Z49544">
    <property type="protein sequence ID" value="CAA89572.1"/>
    <property type="molecule type" value="Genomic_DNA"/>
</dbReference>
<dbReference type="EMBL" id="L36344">
    <property type="protein sequence ID" value="AAA88746.1"/>
    <property type="molecule type" value="Genomic_DNA"/>
</dbReference>
<dbReference type="EMBL" id="AY557891">
    <property type="protein sequence ID" value="AAS56217.1"/>
    <property type="molecule type" value="Genomic_DNA"/>
</dbReference>
<dbReference type="EMBL" id="BK006943">
    <property type="protein sequence ID" value="DAA08831.1"/>
    <property type="molecule type" value="Genomic_DNA"/>
</dbReference>
<dbReference type="PIR" id="S57063">
    <property type="entry name" value="S57063"/>
</dbReference>
<dbReference type="RefSeq" id="NP_012578.3">
    <property type="nucleotide sequence ID" value="NM_001181702.3"/>
</dbReference>
<dbReference type="BioGRID" id="33796">
    <property type="interactions" value="220"/>
</dbReference>
<dbReference type="ComplexPortal" id="CPX-1413">
    <property type="entry name" value="VPS55-VPS68 sorting complex"/>
</dbReference>
<dbReference type="DIP" id="DIP-7667N"/>
<dbReference type="FunCoup" id="P47111">
    <property type="interactions" value="627"/>
</dbReference>
<dbReference type="IntAct" id="P47111">
    <property type="interactions" value="6"/>
</dbReference>
<dbReference type="MINT" id="P47111"/>
<dbReference type="STRING" id="4932.YJR044C"/>
<dbReference type="iPTMnet" id="P47111"/>
<dbReference type="PaxDb" id="4932-YJR044C"/>
<dbReference type="PeptideAtlas" id="P47111"/>
<dbReference type="EnsemblFungi" id="YJR044C_mRNA">
    <property type="protein sequence ID" value="YJR044C"/>
    <property type="gene ID" value="YJR044C"/>
</dbReference>
<dbReference type="GeneID" id="853502"/>
<dbReference type="KEGG" id="sce:YJR044C"/>
<dbReference type="AGR" id="SGD:S000003805"/>
<dbReference type="SGD" id="S000003805">
    <property type="gene designation" value="VPS55"/>
</dbReference>
<dbReference type="VEuPathDB" id="FungiDB:YJR044C"/>
<dbReference type="eggNOG" id="KOG2174">
    <property type="taxonomic scope" value="Eukaryota"/>
</dbReference>
<dbReference type="GeneTree" id="ENSGT00390000006503"/>
<dbReference type="HOGENOM" id="CLU_134810_0_0_1"/>
<dbReference type="InParanoid" id="P47111"/>
<dbReference type="OMA" id="ICARCAN"/>
<dbReference type="OrthoDB" id="14246at2759"/>
<dbReference type="BioCyc" id="YEAST:G3O-31679-MONOMER"/>
<dbReference type="BioGRID-ORCS" id="853502">
    <property type="hits" value="0 hits in 10 CRISPR screens"/>
</dbReference>
<dbReference type="PRO" id="PR:P47111"/>
<dbReference type="Proteomes" id="UP000002311">
    <property type="component" value="Chromosome X"/>
</dbReference>
<dbReference type="RNAct" id="P47111">
    <property type="molecule type" value="protein"/>
</dbReference>
<dbReference type="GO" id="GO:0005768">
    <property type="term" value="C:endosome"/>
    <property type="evidence" value="ECO:0000318"/>
    <property type="project" value="GO_Central"/>
</dbReference>
<dbReference type="GO" id="GO:0005770">
    <property type="term" value="C:late endosome"/>
    <property type="evidence" value="ECO:0000314"/>
    <property type="project" value="SGD"/>
</dbReference>
<dbReference type="GO" id="GO:0034424">
    <property type="term" value="C:Vps55/Vps68 complex"/>
    <property type="evidence" value="ECO:0000314"/>
    <property type="project" value="SGD"/>
</dbReference>
<dbReference type="GO" id="GO:0032511">
    <property type="term" value="P:late endosome to vacuole transport via multivesicular body sorting pathway"/>
    <property type="evidence" value="ECO:0000315"/>
    <property type="project" value="SGD"/>
</dbReference>
<dbReference type="GO" id="GO:0015031">
    <property type="term" value="P:protein transport"/>
    <property type="evidence" value="ECO:0007669"/>
    <property type="project" value="UniProtKB-KW"/>
</dbReference>
<dbReference type="InterPro" id="IPR007262">
    <property type="entry name" value="Vps55/LEPROT"/>
</dbReference>
<dbReference type="PANTHER" id="PTHR12050">
    <property type="entry name" value="LEPTIN RECEPTOR-RELATED"/>
    <property type="match status" value="1"/>
</dbReference>
<dbReference type="PANTHER" id="PTHR12050:SF0">
    <property type="entry name" value="RH04491P"/>
    <property type="match status" value="1"/>
</dbReference>
<dbReference type="Pfam" id="PF04133">
    <property type="entry name" value="Vps55"/>
    <property type="match status" value="1"/>
</dbReference>
<organism>
    <name type="scientific">Saccharomyces cerevisiae (strain ATCC 204508 / S288c)</name>
    <name type="common">Baker's yeast</name>
    <dbReference type="NCBI Taxonomy" id="559292"/>
    <lineage>
        <taxon>Eukaryota</taxon>
        <taxon>Fungi</taxon>
        <taxon>Dikarya</taxon>
        <taxon>Ascomycota</taxon>
        <taxon>Saccharomycotina</taxon>
        <taxon>Saccharomycetes</taxon>
        <taxon>Saccharomycetales</taxon>
        <taxon>Saccharomycetaceae</taxon>
        <taxon>Saccharomyces</taxon>
    </lineage>
</organism>
<keyword id="KW-0967">Endosome</keyword>
<keyword id="KW-0472">Membrane</keyword>
<keyword id="KW-0597">Phosphoprotein</keyword>
<keyword id="KW-0653">Protein transport</keyword>
<keyword id="KW-1185">Reference proteome</keyword>
<keyword id="KW-0812">Transmembrane</keyword>
<keyword id="KW-1133">Transmembrane helix</keyword>
<keyword id="KW-0813">Transport</keyword>
<comment type="function">
    <text evidence="2">Involved in protein transport from endosomes to the vacuole.</text>
</comment>
<comment type="interaction">
    <interactant intactId="EBI-25497">
        <id>P47111</id>
    </interactant>
    <interactant intactId="EBI-29309">
        <id>Q12016</id>
        <label>VPS68</label>
    </interactant>
    <organismsDiffer>false</organismsDiffer>
    <experiments>3</experiments>
</comment>
<comment type="subcellular location">
    <subcellularLocation>
        <location evidence="4">Endosome membrane</location>
        <topology evidence="4">Multi-pass membrane protein</topology>
    </subcellularLocation>
</comment>
<comment type="miscellaneous">
    <text evidence="3">Present with 2340 molecules/cell in log phase SD medium.</text>
</comment>
<comment type="similarity">
    <text evidence="4">Belongs to the OB-RGRP/VPS55 family.</text>
</comment>
<reference key="1">
    <citation type="journal article" date="1995" name="Yeast">
        <title>Analysis of a 42.5 kb DNA sequence of chromosome X reveals three tRNA genes and 14 new open reading frames including a gene most probably belonging to the family of ubiquitin-protein ligases.</title>
        <authorList>
            <person name="Huang M.-E."/>
            <person name="Chuat J.-C."/>
            <person name="Galibert F."/>
        </authorList>
    </citation>
    <scope>NUCLEOTIDE SEQUENCE [GENOMIC DNA]</scope>
    <source>
        <strain>ATCC 204508 / S288c</strain>
    </source>
</reference>
<reference key="2">
    <citation type="journal article" date="1996" name="EMBO J.">
        <title>Complete nucleotide sequence of Saccharomyces cerevisiae chromosome X.</title>
        <authorList>
            <person name="Galibert F."/>
            <person name="Alexandraki D."/>
            <person name="Baur A."/>
            <person name="Boles E."/>
            <person name="Chalwatzis N."/>
            <person name="Chuat J.-C."/>
            <person name="Coster F."/>
            <person name="Cziepluch C."/>
            <person name="de Haan M."/>
            <person name="Domdey H."/>
            <person name="Durand P."/>
            <person name="Entian K.-D."/>
            <person name="Gatius M."/>
            <person name="Goffeau A."/>
            <person name="Grivell L.A."/>
            <person name="Hennemann A."/>
            <person name="Herbert C.J."/>
            <person name="Heumann K."/>
            <person name="Hilger F."/>
            <person name="Hollenberg C.P."/>
            <person name="Huang M.-E."/>
            <person name="Jacq C."/>
            <person name="Jauniaux J.-C."/>
            <person name="Katsoulou C."/>
            <person name="Kirchrath L."/>
            <person name="Kleine K."/>
            <person name="Kordes E."/>
            <person name="Koetter P."/>
            <person name="Liebl S."/>
            <person name="Louis E.J."/>
            <person name="Manus V."/>
            <person name="Mewes H.-W."/>
            <person name="Miosga T."/>
            <person name="Obermaier B."/>
            <person name="Perea J."/>
            <person name="Pohl T.M."/>
            <person name="Portetelle D."/>
            <person name="Pujol A."/>
            <person name="Purnelle B."/>
            <person name="Ramezani Rad M."/>
            <person name="Rasmussen S.W."/>
            <person name="Rose M."/>
            <person name="Rossau R."/>
            <person name="Schaaff-Gerstenschlaeger I."/>
            <person name="Smits P.H.M."/>
            <person name="Scarcez T."/>
            <person name="Soriano N."/>
            <person name="To Van D."/>
            <person name="Tzermia M."/>
            <person name="Van Broekhoven A."/>
            <person name="Vandenbol M."/>
            <person name="Wedler H."/>
            <person name="von Wettstein D."/>
            <person name="Wambutt R."/>
            <person name="Zagulski M."/>
            <person name="Zollner A."/>
            <person name="Karpfinger-Hartl L."/>
        </authorList>
    </citation>
    <scope>NUCLEOTIDE SEQUENCE [LARGE SCALE GENOMIC DNA]</scope>
    <source>
        <strain>ATCC 204508 / S288c</strain>
    </source>
</reference>
<reference key="3">
    <citation type="journal article" date="2014" name="G3 (Bethesda)">
        <title>The reference genome sequence of Saccharomyces cerevisiae: Then and now.</title>
        <authorList>
            <person name="Engel S.R."/>
            <person name="Dietrich F.S."/>
            <person name="Fisk D.G."/>
            <person name="Binkley G."/>
            <person name="Balakrishnan R."/>
            <person name="Costanzo M.C."/>
            <person name="Dwight S.S."/>
            <person name="Hitz B.C."/>
            <person name="Karra K."/>
            <person name="Nash R.S."/>
            <person name="Weng S."/>
            <person name="Wong E.D."/>
            <person name="Lloyd P."/>
            <person name="Skrzypek M.S."/>
            <person name="Miyasato S.R."/>
            <person name="Simison M."/>
            <person name="Cherry J.M."/>
        </authorList>
    </citation>
    <scope>GENOME REANNOTATION</scope>
    <source>
        <strain>ATCC 204508 / S288c</strain>
    </source>
</reference>
<reference key="4">
    <citation type="journal article" date="2007" name="Genome Res.">
        <title>Approaching a complete repository of sequence-verified protein-encoding clones for Saccharomyces cerevisiae.</title>
        <authorList>
            <person name="Hu Y."/>
            <person name="Rolfs A."/>
            <person name="Bhullar B."/>
            <person name="Murthy T.V.S."/>
            <person name="Zhu C."/>
            <person name="Berger M.F."/>
            <person name="Camargo A.A."/>
            <person name="Kelley F."/>
            <person name="McCarron S."/>
            <person name="Jepson D."/>
            <person name="Richardson A."/>
            <person name="Raphael J."/>
            <person name="Moreira D."/>
            <person name="Taycher E."/>
            <person name="Zuo D."/>
            <person name="Mohr S."/>
            <person name="Kane M.F."/>
            <person name="Williamson J."/>
            <person name="Simpson A.J.G."/>
            <person name="Bulyk M.L."/>
            <person name="Harlow E."/>
            <person name="Marsischky G."/>
            <person name="Kolodner R.D."/>
            <person name="LaBaer J."/>
        </authorList>
    </citation>
    <scope>NUCLEOTIDE SEQUENCE [GENOMIC DNA]</scope>
    <source>
        <strain>ATCC 204508 / S288c</strain>
    </source>
</reference>
<reference key="5">
    <citation type="journal article" date="2002" name="Mol. Biol. Cell">
        <title>Yeast Vps55p, a functional homolog of human obesity receptor gene-related protein, is involved in late endosome to vacuole trafficking.</title>
        <authorList>
            <person name="Belgareh-Touze N."/>
            <person name="Avaro S."/>
            <person name="Rouille Y."/>
            <person name="Hoflack B."/>
            <person name="Haguenauer-Tsapis R."/>
        </authorList>
    </citation>
    <scope>FUNCTION</scope>
    <scope>SUBCELLULAR LOCATION</scope>
</reference>
<reference key="6">
    <citation type="journal article" date="2003" name="Nature">
        <title>Global analysis of protein localization in budding yeast.</title>
        <authorList>
            <person name="Huh W.-K."/>
            <person name="Falvo J.V."/>
            <person name="Gerke L.C."/>
            <person name="Carroll A.S."/>
            <person name="Howson R.W."/>
            <person name="Weissman J.S."/>
            <person name="O'Shea E.K."/>
        </authorList>
    </citation>
    <scope>SUBCELLULAR LOCATION [LARGE SCALE ANALYSIS]</scope>
</reference>
<reference key="7">
    <citation type="journal article" date="2003" name="Nature">
        <title>Global analysis of protein expression in yeast.</title>
        <authorList>
            <person name="Ghaemmaghami S."/>
            <person name="Huh W.-K."/>
            <person name="Bower K."/>
            <person name="Howson R.W."/>
            <person name="Belle A."/>
            <person name="Dephoure N."/>
            <person name="O'Shea E.K."/>
            <person name="Weissman J.S."/>
        </authorList>
    </citation>
    <scope>LEVEL OF PROTEIN EXPRESSION [LARGE SCALE ANALYSIS]</scope>
</reference>
<reference key="8">
    <citation type="journal article" date="2006" name="Proc. Natl. Acad. Sci. U.S.A.">
        <title>A global topology map of the Saccharomyces cerevisiae membrane proteome.</title>
        <authorList>
            <person name="Kim H."/>
            <person name="Melen K."/>
            <person name="Oesterberg M."/>
            <person name="von Heijne G."/>
        </authorList>
    </citation>
    <scope>TOPOLOGY [LARGE SCALE ANALYSIS]</scope>
    <source>
        <strain>ATCC 208353 / W303-1A</strain>
    </source>
</reference>
<reference key="9">
    <citation type="journal article" date="2009" name="Science">
        <title>Global analysis of Cdk1 substrate phosphorylation sites provides insights into evolution.</title>
        <authorList>
            <person name="Holt L.J."/>
            <person name="Tuch B.B."/>
            <person name="Villen J."/>
            <person name="Johnson A.D."/>
            <person name="Gygi S.P."/>
            <person name="Morgan D.O."/>
        </authorList>
    </citation>
    <scope>PHOSPHORYLATION [LARGE SCALE ANALYSIS] AT SER-137</scope>
    <scope>IDENTIFICATION BY MASS SPECTROMETRY [LARGE SCALE ANALYSIS]</scope>
</reference>
<name>VPS55_YEAST</name>
<protein>
    <recommendedName>
        <fullName>Vacuolar protein sorting-associated protein 55</fullName>
    </recommendedName>
</protein>
<feature type="chain" id="PRO_0000215201" description="Vacuolar protein sorting-associated protein 55">
    <location>
        <begin position="1"/>
        <end position="140"/>
    </location>
</feature>
<feature type="topological domain" description="Cytoplasmic" evidence="1">
    <location>
        <begin position="1"/>
        <end position="11"/>
    </location>
</feature>
<feature type="transmembrane region" description="Helical" evidence="1">
    <location>
        <begin position="12"/>
        <end position="32"/>
    </location>
</feature>
<feature type="topological domain" description="Lumenal" evidence="1">
    <location>
        <begin position="33"/>
        <end position="37"/>
    </location>
</feature>
<feature type="transmembrane region" description="Helical" evidence="1">
    <location>
        <begin position="38"/>
        <end position="58"/>
    </location>
</feature>
<feature type="topological domain" description="Cytoplasmic" evidence="1">
    <location>
        <begin position="59"/>
        <end position="76"/>
    </location>
</feature>
<feature type="transmembrane region" description="Helical" evidence="1">
    <location>
        <begin position="77"/>
        <end position="97"/>
    </location>
</feature>
<feature type="topological domain" description="Lumenal" evidence="1">
    <location>
        <begin position="98"/>
        <end position="107"/>
    </location>
</feature>
<feature type="transmembrane region" description="Helical" evidence="1">
    <location>
        <begin position="108"/>
        <end position="128"/>
    </location>
</feature>
<feature type="topological domain" description="Cytoplasmic" evidence="1">
    <location>
        <begin position="129"/>
        <end position="140"/>
    </location>
</feature>
<feature type="modified residue" description="Phosphoserine" evidence="5">
    <location>
        <position position="137"/>
    </location>
</feature>
<accession>P47111</accession>
<accession>D6VWL5</accession>
<sequence length="140" mass="15664">MMEFKVSPLTKIISLSGFLALGFLLVILSCALFHNYYPLFDILIFLLAPIPNTIFNAGNKYHTSDFMSDSSNTGQDLAHFLTGMLVTSGIALPVVFYHCQLIGHLSCIMCMIGGLIIYSSIVIFKWFFKKDFNEDDSLFG</sequence>
<gene>
    <name type="primary">VPS55</name>
    <name type="ordered locus">YJR044C</name>
    <name type="ORF">J1637</name>
</gene>
<proteinExistence type="evidence at protein level"/>
<evidence type="ECO:0000255" key="1"/>
<evidence type="ECO:0000269" key="2">
    <source>
    </source>
</evidence>
<evidence type="ECO:0000269" key="3">
    <source>
    </source>
</evidence>
<evidence type="ECO:0000305" key="4"/>
<evidence type="ECO:0007744" key="5">
    <source>
    </source>
</evidence>